<organism>
    <name type="scientific">Schizosaccharomyces pombe (strain 972 / ATCC 24843)</name>
    <name type="common">Fission yeast</name>
    <dbReference type="NCBI Taxonomy" id="284812"/>
    <lineage>
        <taxon>Eukaryota</taxon>
        <taxon>Fungi</taxon>
        <taxon>Dikarya</taxon>
        <taxon>Ascomycota</taxon>
        <taxon>Taphrinomycotina</taxon>
        <taxon>Schizosaccharomycetes</taxon>
        <taxon>Schizosaccharomycetales</taxon>
        <taxon>Schizosaccharomycetaceae</taxon>
        <taxon>Schizosaccharomyces</taxon>
    </lineage>
</organism>
<proteinExistence type="inferred from homology"/>
<keyword id="KW-0067">ATP-binding</keyword>
<keyword id="KW-0276">Fatty acid metabolism</keyword>
<keyword id="KW-0333">Golgi apparatus</keyword>
<keyword id="KW-0436">Ligase</keyword>
<keyword id="KW-0443">Lipid metabolism</keyword>
<keyword id="KW-0472">Membrane</keyword>
<keyword id="KW-0547">Nucleotide-binding</keyword>
<keyword id="KW-1185">Reference proteome</keyword>
<keyword id="KW-0926">Vacuole</keyword>
<feature type="chain" id="PRO_0000311761" description="Long-chain-fatty-acid--CoA ligase 2">
    <location>
        <begin position="1"/>
        <end position="689"/>
    </location>
</feature>
<feature type="short sequence motif" description="FACS" evidence="2">
    <location>
        <begin position="518"/>
        <end position="567"/>
    </location>
</feature>
<feature type="binding site" evidence="3">
    <location>
        <begin position="252"/>
        <end position="263"/>
    </location>
    <ligand>
        <name>ATP</name>
        <dbReference type="ChEBI" id="CHEBI:30616"/>
    </ligand>
</feature>
<gene>
    <name type="primary">lcf2</name>
    <name type="ORF">SPBP4H10.11c</name>
</gene>
<accession>Q9P7D7</accession>
<reference key="1">
    <citation type="journal article" date="2002" name="Nature">
        <title>The genome sequence of Schizosaccharomyces pombe.</title>
        <authorList>
            <person name="Wood V."/>
            <person name="Gwilliam R."/>
            <person name="Rajandream M.A."/>
            <person name="Lyne M.H."/>
            <person name="Lyne R."/>
            <person name="Stewart A."/>
            <person name="Sgouros J.G."/>
            <person name="Peat N."/>
            <person name="Hayles J."/>
            <person name="Baker S.G."/>
            <person name="Basham D."/>
            <person name="Bowman S."/>
            <person name="Brooks K."/>
            <person name="Brown D."/>
            <person name="Brown S."/>
            <person name="Chillingworth T."/>
            <person name="Churcher C.M."/>
            <person name="Collins M."/>
            <person name="Connor R."/>
            <person name="Cronin A."/>
            <person name="Davis P."/>
            <person name="Feltwell T."/>
            <person name="Fraser A."/>
            <person name="Gentles S."/>
            <person name="Goble A."/>
            <person name="Hamlin N."/>
            <person name="Harris D.E."/>
            <person name="Hidalgo J."/>
            <person name="Hodgson G."/>
            <person name="Holroyd S."/>
            <person name="Hornsby T."/>
            <person name="Howarth S."/>
            <person name="Huckle E.J."/>
            <person name="Hunt S."/>
            <person name="Jagels K."/>
            <person name="James K.D."/>
            <person name="Jones L."/>
            <person name="Jones M."/>
            <person name="Leather S."/>
            <person name="McDonald S."/>
            <person name="McLean J."/>
            <person name="Mooney P."/>
            <person name="Moule S."/>
            <person name="Mungall K.L."/>
            <person name="Murphy L.D."/>
            <person name="Niblett D."/>
            <person name="Odell C."/>
            <person name="Oliver K."/>
            <person name="O'Neil S."/>
            <person name="Pearson D."/>
            <person name="Quail M.A."/>
            <person name="Rabbinowitsch E."/>
            <person name="Rutherford K.M."/>
            <person name="Rutter S."/>
            <person name="Saunders D."/>
            <person name="Seeger K."/>
            <person name="Sharp S."/>
            <person name="Skelton J."/>
            <person name="Simmonds M.N."/>
            <person name="Squares R."/>
            <person name="Squares S."/>
            <person name="Stevens K."/>
            <person name="Taylor K."/>
            <person name="Taylor R.G."/>
            <person name="Tivey A."/>
            <person name="Walsh S.V."/>
            <person name="Warren T."/>
            <person name="Whitehead S."/>
            <person name="Woodward J.R."/>
            <person name="Volckaert G."/>
            <person name="Aert R."/>
            <person name="Robben J."/>
            <person name="Grymonprez B."/>
            <person name="Weltjens I."/>
            <person name="Vanstreels E."/>
            <person name="Rieger M."/>
            <person name="Schaefer M."/>
            <person name="Mueller-Auer S."/>
            <person name="Gabel C."/>
            <person name="Fuchs M."/>
            <person name="Duesterhoeft A."/>
            <person name="Fritzc C."/>
            <person name="Holzer E."/>
            <person name="Moestl D."/>
            <person name="Hilbert H."/>
            <person name="Borzym K."/>
            <person name="Langer I."/>
            <person name="Beck A."/>
            <person name="Lehrach H."/>
            <person name="Reinhardt R."/>
            <person name="Pohl T.M."/>
            <person name="Eger P."/>
            <person name="Zimmermann W."/>
            <person name="Wedler H."/>
            <person name="Wambutt R."/>
            <person name="Purnelle B."/>
            <person name="Goffeau A."/>
            <person name="Cadieu E."/>
            <person name="Dreano S."/>
            <person name="Gloux S."/>
            <person name="Lelaure V."/>
            <person name="Mottier S."/>
            <person name="Galibert F."/>
            <person name="Aves S.J."/>
            <person name="Xiang Z."/>
            <person name="Hunt C."/>
            <person name="Moore K."/>
            <person name="Hurst S.M."/>
            <person name="Lucas M."/>
            <person name="Rochet M."/>
            <person name="Gaillardin C."/>
            <person name="Tallada V.A."/>
            <person name="Garzon A."/>
            <person name="Thode G."/>
            <person name="Daga R.R."/>
            <person name="Cruzado L."/>
            <person name="Jimenez J."/>
            <person name="Sanchez M."/>
            <person name="del Rey F."/>
            <person name="Benito J."/>
            <person name="Dominguez A."/>
            <person name="Revuelta J.L."/>
            <person name="Moreno S."/>
            <person name="Armstrong J."/>
            <person name="Forsburg S.L."/>
            <person name="Cerutti L."/>
            <person name="Lowe T."/>
            <person name="McCombie W.R."/>
            <person name="Paulsen I."/>
            <person name="Potashkin J."/>
            <person name="Shpakovski G.V."/>
            <person name="Ussery D."/>
            <person name="Barrell B.G."/>
            <person name="Nurse P."/>
        </authorList>
    </citation>
    <scope>NUCLEOTIDE SEQUENCE [LARGE SCALE GENOMIC DNA]</scope>
    <source>
        <strain>972 / ATCC 24843</strain>
    </source>
</reference>
<reference key="2">
    <citation type="journal article" date="2006" name="Nat. Biotechnol.">
        <title>ORFeome cloning and global analysis of protein localization in the fission yeast Schizosaccharomyces pombe.</title>
        <authorList>
            <person name="Matsuyama A."/>
            <person name="Arai R."/>
            <person name="Yashiroda Y."/>
            <person name="Shirai A."/>
            <person name="Kamata A."/>
            <person name="Sekido S."/>
            <person name="Kobayashi Y."/>
            <person name="Hashimoto A."/>
            <person name="Hamamoto M."/>
            <person name="Hiraoka Y."/>
            <person name="Horinouchi S."/>
            <person name="Yoshida M."/>
        </authorList>
    </citation>
    <scope>SUBCELLULAR LOCATION [LARGE SCALE ANALYSIS]</scope>
</reference>
<reference key="3">
    <citation type="journal article" date="2007" name="Biosci. Biotechnol. Biochem.">
        <title>Identification of a fatty acyl-CoA synthetase gene, lcf2+, which affects viability after entry into the stationary phase in Schizosaccharomyces pombe.</title>
        <authorList>
            <person name="Fujita Y."/>
            <person name="Mita S."/>
            <person name="Ohtsuka H."/>
            <person name="Aiba H."/>
        </authorList>
    </citation>
    <scope>FUNCTION</scope>
</reference>
<name>LCF2_SCHPO</name>
<dbReference type="EC" id="6.2.1.3"/>
<dbReference type="EMBL" id="CU329671">
    <property type="protein sequence ID" value="CAB83169.1"/>
    <property type="molecule type" value="Genomic_DNA"/>
</dbReference>
<dbReference type="RefSeq" id="NP_596185.1">
    <property type="nucleotide sequence ID" value="NM_001022104.2"/>
</dbReference>
<dbReference type="SMR" id="Q9P7D7"/>
<dbReference type="BioGRID" id="277861">
    <property type="interactions" value="8"/>
</dbReference>
<dbReference type="FunCoup" id="Q9P7D7">
    <property type="interactions" value="141"/>
</dbReference>
<dbReference type="IntAct" id="Q9P7D7">
    <property type="interactions" value="1"/>
</dbReference>
<dbReference type="MINT" id="Q9P7D7"/>
<dbReference type="STRING" id="284812.Q9P7D7"/>
<dbReference type="iPTMnet" id="Q9P7D7"/>
<dbReference type="PaxDb" id="4896-SPBP4H10.11c.1"/>
<dbReference type="EnsemblFungi" id="SPBP4H10.11c.1">
    <property type="protein sequence ID" value="SPBP4H10.11c.1:pep"/>
    <property type="gene ID" value="SPBP4H10.11c"/>
</dbReference>
<dbReference type="GeneID" id="2541350"/>
<dbReference type="KEGG" id="spo:2541350"/>
<dbReference type="PomBase" id="SPBP4H10.11c">
    <property type="gene designation" value="lcf2"/>
</dbReference>
<dbReference type="VEuPathDB" id="FungiDB:SPBP4H10.11c"/>
<dbReference type="eggNOG" id="KOG1180">
    <property type="taxonomic scope" value="Eukaryota"/>
</dbReference>
<dbReference type="HOGENOM" id="CLU_000022_45_2_1"/>
<dbReference type="InParanoid" id="Q9P7D7"/>
<dbReference type="OMA" id="HIFEFIF"/>
<dbReference type="PhylomeDB" id="Q9P7D7"/>
<dbReference type="Reactome" id="R-SPO-434313">
    <property type="pathway name" value="Intracellular metabolism of fatty acids regulates insulin secretion"/>
</dbReference>
<dbReference type="Reactome" id="R-SPO-75876">
    <property type="pathway name" value="Synthesis of very long-chain fatty acyl-CoAs"/>
</dbReference>
<dbReference type="PRO" id="PR:Q9P7D7"/>
<dbReference type="Proteomes" id="UP000002485">
    <property type="component" value="Chromosome II"/>
</dbReference>
<dbReference type="GO" id="GO:0005783">
    <property type="term" value="C:endoplasmic reticulum"/>
    <property type="evidence" value="ECO:0000318"/>
    <property type="project" value="GO_Central"/>
</dbReference>
<dbReference type="GO" id="GO:0000329">
    <property type="term" value="C:fungal-type vacuole membrane"/>
    <property type="evidence" value="ECO:0007005"/>
    <property type="project" value="PomBase"/>
</dbReference>
<dbReference type="GO" id="GO:0005794">
    <property type="term" value="C:Golgi apparatus"/>
    <property type="evidence" value="ECO:0007005"/>
    <property type="project" value="PomBase"/>
</dbReference>
<dbReference type="GO" id="GO:0005811">
    <property type="term" value="C:lipid droplet"/>
    <property type="evidence" value="ECO:0000318"/>
    <property type="project" value="GO_Central"/>
</dbReference>
<dbReference type="GO" id="GO:0005886">
    <property type="term" value="C:plasma membrane"/>
    <property type="evidence" value="ECO:0000318"/>
    <property type="project" value="GO_Central"/>
</dbReference>
<dbReference type="GO" id="GO:0005524">
    <property type="term" value="F:ATP binding"/>
    <property type="evidence" value="ECO:0007669"/>
    <property type="project" value="UniProtKB-KW"/>
</dbReference>
<dbReference type="GO" id="GO:0016887">
    <property type="term" value="F:ATP hydrolysis activity"/>
    <property type="evidence" value="ECO:0000305"/>
    <property type="project" value="PomBase"/>
</dbReference>
<dbReference type="GO" id="GO:0004467">
    <property type="term" value="F:long-chain fatty acid-CoA ligase activity"/>
    <property type="evidence" value="ECO:0000318"/>
    <property type="project" value="GO_Central"/>
</dbReference>
<dbReference type="GO" id="GO:0090432">
    <property type="term" value="F:myristoyl-CoA ligase activity"/>
    <property type="evidence" value="ECO:0000315"/>
    <property type="project" value="PomBase"/>
</dbReference>
<dbReference type="GO" id="GO:0001676">
    <property type="term" value="P:long-chain fatty acid metabolic process"/>
    <property type="evidence" value="ECO:0000318"/>
    <property type="project" value="GO_Central"/>
</dbReference>
<dbReference type="GO" id="GO:0035336">
    <property type="term" value="P:long-chain fatty-acyl-CoA metabolic process"/>
    <property type="evidence" value="ECO:0000316"/>
    <property type="project" value="PomBase"/>
</dbReference>
<dbReference type="CDD" id="cd17639">
    <property type="entry name" value="LC_FACS_euk1"/>
    <property type="match status" value="1"/>
</dbReference>
<dbReference type="Gene3D" id="3.40.50.12780">
    <property type="entry name" value="N-terminal domain of ligase-like"/>
    <property type="match status" value="1"/>
</dbReference>
<dbReference type="InterPro" id="IPR020845">
    <property type="entry name" value="AMP-binding_CS"/>
</dbReference>
<dbReference type="InterPro" id="IPR000873">
    <property type="entry name" value="AMP-dep_synth/lig_dom"/>
</dbReference>
<dbReference type="InterPro" id="IPR042099">
    <property type="entry name" value="ANL_N_sf"/>
</dbReference>
<dbReference type="PANTHER" id="PTHR43272">
    <property type="entry name" value="LONG-CHAIN-FATTY-ACID--COA LIGASE"/>
    <property type="match status" value="1"/>
</dbReference>
<dbReference type="PANTHER" id="PTHR43272:SF97">
    <property type="entry name" value="LONG-CHAIN-FATTY-ACID--COA LIGASE 2"/>
    <property type="match status" value="1"/>
</dbReference>
<dbReference type="Pfam" id="PF00501">
    <property type="entry name" value="AMP-binding"/>
    <property type="match status" value="1"/>
</dbReference>
<dbReference type="SUPFAM" id="SSF56801">
    <property type="entry name" value="Acetyl-CoA synthetase-like"/>
    <property type="match status" value="1"/>
</dbReference>
<dbReference type="PROSITE" id="PS00455">
    <property type="entry name" value="AMP_BINDING"/>
    <property type="match status" value="1"/>
</dbReference>
<evidence type="ECO:0000250" key="1"/>
<evidence type="ECO:0000250" key="2">
    <source>
        <dbReference type="UniProtKB" id="P30624"/>
    </source>
</evidence>
<evidence type="ECO:0000250" key="3">
    <source>
        <dbReference type="UniProtKB" id="P69451"/>
    </source>
</evidence>
<evidence type="ECO:0000269" key="4">
    <source>
    </source>
</evidence>
<evidence type="ECO:0000269" key="5">
    <source>
    </source>
</evidence>
<evidence type="ECO:0000305" key="6"/>
<protein>
    <recommendedName>
        <fullName>Long-chain-fatty-acid--CoA ligase 2</fullName>
        <ecNumber>6.2.1.3</ecNumber>
    </recommendedName>
    <alternativeName>
        <fullName>Fatty acid activator 2</fullName>
    </alternativeName>
    <alternativeName>
        <fullName>Long-chain acyl-CoA synthetase 2</fullName>
    </alternativeName>
</protein>
<sequence>MDIKDYYCVETKDSKQPGESYIYRSIHSAGKLLDTPEDGVSTVYDLLCTAAKNHGEKQAMGSRKLIKENREEREIIRKVDNEEVVEKKLWTTYELGPYEYISFNKVYEIALALGSGLVASGITSETTMLFFAATSAKWFTTAQGCSSQAIPIVTAYETLGEDGIYTSLDECKSRAIFTDPNLIPKLLGPLKQSTWVKLIVCSSTPSEDLVELVKSTAPDVEIITYDNLLSLGKEKPQPPHPPKADDICCYMYTSGSTGKPKGVVLLHRNIIAALGGINRILSQHINVKDYVLAYLPLAHIFEFIFEMCCLYWGGVLGYASPRTLTDASVVNCKGDLTEFRPTVLIGVPAVYELIKKGILAKVSSMPAHRQKVFSGSLSLKQYLIERNLPGSAALDAIVFNKVKAATGGRLRYCISGGAALAASTQAFLSSCICPVLPGYGLTETCAGSFVLSPEQWHLYANTVGFPIPSIEFKLVDIPDLGYYTDSSPPRGEVWIRGPAVCNGYLNRPEDNKAAFTEDGWFKTGDVGEIAKGNTLRLIDRKKNIVKSLNGEYIALEKIEAQFFTSPLVSNVCAYADVNHAKPVVIVNPDENGLRTYLTKNSGSSFNGNPNDTLTNLCKDSGVQHLILKELINIGKQQRLASIEIPEGVVLSDFEWTAENNFLTASRKVKRQVIVAHYSDEIQKAYSKKH</sequence>
<comment type="function">
    <text evidence="5">Esterification, concomitant with transport, of endogenous long-chain fatty acids into metabolically active CoA thioesters for subsequent degradation or incorporation into phospholipids. Plays an important role in the determination of viability in the stationary phase.</text>
</comment>
<comment type="catalytic activity">
    <reaction>
        <text>a long-chain fatty acid + ATP + CoA = a long-chain fatty acyl-CoA + AMP + diphosphate</text>
        <dbReference type="Rhea" id="RHEA:15421"/>
        <dbReference type="ChEBI" id="CHEBI:30616"/>
        <dbReference type="ChEBI" id="CHEBI:33019"/>
        <dbReference type="ChEBI" id="CHEBI:57287"/>
        <dbReference type="ChEBI" id="CHEBI:57560"/>
        <dbReference type="ChEBI" id="CHEBI:83139"/>
        <dbReference type="ChEBI" id="CHEBI:456215"/>
        <dbReference type="EC" id="6.2.1.3"/>
    </reaction>
</comment>
<comment type="cofactor">
    <cofactor evidence="1">
        <name>Mg(2+)</name>
        <dbReference type="ChEBI" id="CHEBI:18420"/>
    </cofactor>
</comment>
<comment type="subcellular location">
    <subcellularLocation>
        <location evidence="4">Golgi apparatus</location>
    </subcellularLocation>
    <subcellularLocation>
        <location evidence="4">Vacuole membrane</location>
        <topology evidence="4">Peripheral membrane protein</topology>
    </subcellularLocation>
</comment>
<comment type="domain">
    <text evidence="2">The FACS motif is required for catalytic activity and substrate specificity.</text>
</comment>
<comment type="similarity">
    <text evidence="6">Belongs to the ATP-dependent AMP-binding enzyme family.</text>
</comment>